<sequence length="143" mass="16044">MSRSGVAVADESLNAFNDLKLGKKYKFILYALNDSKTEIIVKETSAEQDYDKFLEQLPENDCLYAVYDFEYELGNNEGKRSKIVFFTWSPDTAPVRSKMVYASSKDALRRALNGVSSDIQGTDFSEVAYESVLEKVSRAAGSH</sequence>
<accession>Q6CQ22</accession>
<proteinExistence type="inferred from homology"/>
<gene>
    <name type="primary">COF1</name>
    <name type="ordered locus">KLLA0E00396g</name>
</gene>
<organism>
    <name type="scientific">Kluyveromyces lactis (strain ATCC 8585 / CBS 2359 / DSM 70799 / NBRC 1267 / NRRL Y-1140 / WM37)</name>
    <name type="common">Yeast</name>
    <name type="synonym">Candida sphaerica</name>
    <dbReference type="NCBI Taxonomy" id="284590"/>
    <lineage>
        <taxon>Eukaryota</taxon>
        <taxon>Fungi</taxon>
        <taxon>Dikarya</taxon>
        <taxon>Ascomycota</taxon>
        <taxon>Saccharomycotina</taxon>
        <taxon>Saccharomycetes</taxon>
        <taxon>Saccharomycetales</taxon>
        <taxon>Saccharomycetaceae</taxon>
        <taxon>Kluyveromyces</taxon>
    </lineage>
</organism>
<evidence type="ECO:0000250" key="1"/>
<evidence type="ECO:0000255" key="2">
    <source>
        <dbReference type="PROSITE-ProRule" id="PRU00599"/>
    </source>
</evidence>
<evidence type="ECO:0000305" key="3"/>
<keyword id="KW-0009">Actin-binding</keyword>
<keyword id="KW-0131">Cell cycle</keyword>
<keyword id="KW-0132">Cell division</keyword>
<keyword id="KW-0963">Cytoplasm</keyword>
<keyword id="KW-0206">Cytoskeleton</keyword>
<keyword id="KW-0539">Nucleus</keyword>
<keyword id="KW-1185">Reference proteome</keyword>
<protein>
    <recommendedName>
        <fullName>Cofilin</fullName>
    </recommendedName>
    <alternativeName>
        <fullName>Actin-depolymerizing factor 1</fullName>
    </alternativeName>
</protein>
<feature type="chain" id="PRO_0000255626" description="Cofilin">
    <location>
        <begin position="1"/>
        <end position="143"/>
    </location>
</feature>
<feature type="domain" description="ADF-H" evidence="2">
    <location>
        <begin position="5"/>
        <end position="137"/>
    </location>
</feature>
<dbReference type="EMBL" id="CR382125">
    <property type="protein sequence ID" value="CAG99054.1"/>
    <property type="molecule type" value="Genomic_DNA"/>
</dbReference>
<dbReference type="RefSeq" id="XP_453967.1">
    <property type="nucleotide sequence ID" value="XM_453967.1"/>
</dbReference>
<dbReference type="SMR" id="Q6CQ22"/>
<dbReference type="FunCoup" id="Q6CQ22">
    <property type="interactions" value="862"/>
</dbReference>
<dbReference type="STRING" id="284590.Q6CQ22"/>
<dbReference type="PaxDb" id="284590-Q6CQ22"/>
<dbReference type="KEGG" id="kla:KLLA0_E00463g"/>
<dbReference type="eggNOG" id="KOG1735">
    <property type="taxonomic scope" value="Eukaryota"/>
</dbReference>
<dbReference type="HOGENOM" id="CLU_094004_3_2_1"/>
<dbReference type="InParanoid" id="Q6CQ22"/>
<dbReference type="Proteomes" id="UP000000598">
    <property type="component" value="Chromosome E"/>
</dbReference>
<dbReference type="GO" id="GO:0015629">
    <property type="term" value="C:actin cytoskeleton"/>
    <property type="evidence" value="ECO:0007669"/>
    <property type="project" value="InterPro"/>
</dbReference>
<dbReference type="GO" id="GO:0005737">
    <property type="term" value="C:cytoplasm"/>
    <property type="evidence" value="ECO:0007669"/>
    <property type="project" value="UniProtKB-SubCell"/>
</dbReference>
<dbReference type="GO" id="GO:0016363">
    <property type="term" value="C:nuclear matrix"/>
    <property type="evidence" value="ECO:0007669"/>
    <property type="project" value="UniProtKB-SubCell"/>
</dbReference>
<dbReference type="GO" id="GO:0003779">
    <property type="term" value="F:actin binding"/>
    <property type="evidence" value="ECO:0007669"/>
    <property type="project" value="UniProtKB-KW"/>
</dbReference>
<dbReference type="GO" id="GO:0030042">
    <property type="term" value="P:actin filament depolymerization"/>
    <property type="evidence" value="ECO:0007669"/>
    <property type="project" value="InterPro"/>
</dbReference>
<dbReference type="GO" id="GO:0051301">
    <property type="term" value="P:cell division"/>
    <property type="evidence" value="ECO:0007669"/>
    <property type="project" value="UniProtKB-KW"/>
</dbReference>
<dbReference type="CDD" id="cd11286">
    <property type="entry name" value="ADF_cofilin_like"/>
    <property type="match status" value="1"/>
</dbReference>
<dbReference type="FunFam" id="3.40.20.10:FF:000060">
    <property type="entry name" value="Cofilin"/>
    <property type="match status" value="1"/>
</dbReference>
<dbReference type="Gene3D" id="3.40.20.10">
    <property type="entry name" value="Severin"/>
    <property type="match status" value="1"/>
</dbReference>
<dbReference type="InterPro" id="IPR002108">
    <property type="entry name" value="ADF-H"/>
</dbReference>
<dbReference type="InterPro" id="IPR029006">
    <property type="entry name" value="ADF-H/Gelsolin-like_dom_sf"/>
</dbReference>
<dbReference type="InterPro" id="IPR017904">
    <property type="entry name" value="ADF/Cofilin"/>
</dbReference>
<dbReference type="PANTHER" id="PTHR11913">
    <property type="entry name" value="COFILIN-RELATED"/>
    <property type="match status" value="1"/>
</dbReference>
<dbReference type="Pfam" id="PF00241">
    <property type="entry name" value="Cofilin_ADF"/>
    <property type="match status" value="1"/>
</dbReference>
<dbReference type="SMART" id="SM00102">
    <property type="entry name" value="ADF"/>
    <property type="match status" value="1"/>
</dbReference>
<dbReference type="SUPFAM" id="SSF55753">
    <property type="entry name" value="Actin depolymerizing proteins"/>
    <property type="match status" value="1"/>
</dbReference>
<dbReference type="PROSITE" id="PS51263">
    <property type="entry name" value="ADF_H"/>
    <property type="match status" value="1"/>
</dbReference>
<name>COFI_KLULA</name>
<comment type="function">
    <text evidence="1">Controls reversibly actin polymerization and depolymerization in a pH-sensitive manner. It has the ability to bind G- and F-actin in a 1:1 ratio of cofilin to actin. Binding to F-actin is regulated by tropomyosin. It is the major component of intranuclear and cytoplasmic actin rods. Required for accumulation of actin at the cell division site via depolymerizing actin at the cell ends. In association with myosin II has a role in the assembly of the contractile ring via severing actin filaments. Involved in the maintenance of the contractile ring once formed. In association with profilin and capping protein, has a role in the mitotic reorganization of the actin cytoskeleton (By similarity).</text>
</comment>
<comment type="subcellular location">
    <subcellularLocation>
        <location evidence="1">Cytoplasm</location>
    </subcellularLocation>
    <subcellularLocation>
        <location evidence="1">Cytoplasm</location>
        <location evidence="1">Cytoskeleton</location>
    </subcellularLocation>
    <subcellularLocation>
        <location evidence="1">Nucleus matrix</location>
    </subcellularLocation>
    <text evidence="1">Throughout the cytoplasm (but not on the cytoplasmic cables) and major component of the cortical actin cytoskeleton.</text>
</comment>
<comment type="similarity">
    <text evidence="3">Belongs to the actin-binding proteins ADF family.</text>
</comment>
<reference key="1">
    <citation type="journal article" date="2004" name="Nature">
        <title>Genome evolution in yeasts.</title>
        <authorList>
            <person name="Dujon B."/>
            <person name="Sherman D."/>
            <person name="Fischer G."/>
            <person name="Durrens P."/>
            <person name="Casaregola S."/>
            <person name="Lafontaine I."/>
            <person name="de Montigny J."/>
            <person name="Marck C."/>
            <person name="Neuveglise C."/>
            <person name="Talla E."/>
            <person name="Goffard N."/>
            <person name="Frangeul L."/>
            <person name="Aigle M."/>
            <person name="Anthouard V."/>
            <person name="Babour A."/>
            <person name="Barbe V."/>
            <person name="Barnay S."/>
            <person name="Blanchin S."/>
            <person name="Beckerich J.-M."/>
            <person name="Beyne E."/>
            <person name="Bleykasten C."/>
            <person name="Boisrame A."/>
            <person name="Boyer J."/>
            <person name="Cattolico L."/>
            <person name="Confanioleri F."/>
            <person name="de Daruvar A."/>
            <person name="Despons L."/>
            <person name="Fabre E."/>
            <person name="Fairhead C."/>
            <person name="Ferry-Dumazet H."/>
            <person name="Groppi A."/>
            <person name="Hantraye F."/>
            <person name="Hennequin C."/>
            <person name="Jauniaux N."/>
            <person name="Joyet P."/>
            <person name="Kachouri R."/>
            <person name="Kerrest A."/>
            <person name="Koszul R."/>
            <person name="Lemaire M."/>
            <person name="Lesur I."/>
            <person name="Ma L."/>
            <person name="Muller H."/>
            <person name="Nicaud J.-M."/>
            <person name="Nikolski M."/>
            <person name="Oztas S."/>
            <person name="Ozier-Kalogeropoulos O."/>
            <person name="Pellenz S."/>
            <person name="Potier S."/>
            <person name="Richard G.-F."/>
            <person name="Straub M.-L."/>
            <person name="Suleau A."/>
            <person name="Swennen D."/>
            <person name="Tekaia F."/>
            <person name="Wesolowski-Louvel M."/>
            <person name="Westhof E."/>
            <person name="Wirth B."/>
            <person name="Zeniou-Meyer M."/>
            <person name="Zivanovic Y."/>
            <person name="Bolotin-Fukuhara M."/>
            <person name="Thierry A."/>
            <person name="Bouchier C."/>
            <person name="Caudron B."/>
            <person name="Scarpelli C."/>
            <person name="Gaillardin C."/>
            <person name="Weissenbach J."/>
            <person name="Wincker P."/>
            <person name="Souciet J.-L."/>
        </authorList>
    </citation>
    <scope>NUCLEOTIDE SEQUENCE [LARGE SCALE GENOMIC DNA]</scope>
    <source>
        <strain>ATCC 8585 / CBS 2359 / DSM 70799 / NBRC 1267 / NRRL Y-1140 / WM37</strain>
    </source>
</reference>